<dbReference type="EMBL" id="L20571">
    <property type="status" value="NOT_ANNOTATED_CDS"/>
    <property type="molecule type" value="Genomic_RNA"/>
</dbReference>
<dbReference type="SMR" id="P0C1L3"/>
<dbReference type="Proteomes" id="UP000007698">
    <property type="component" value="Segment"/>
</dbReference>
<dbReference type="GO" id="GO:0030430">
    <property type="term" value="C:host cell cytoplasm"/>
    <property type="evidence" value="ECO:0007669"/>
    <property type="project" value="UniProtKB-SubCell"/>
</dbReference>
<dbReference type="GO" id="GO:0044196">
    <property type="term" value="C:host cell nucleolus"/>
    <property type="evidence" value="ECO:0007669"/>
    <property type="project" value="UniProtKB-SubCell"/>
</dbReference>
<dbReference type="GO" id="GO:0003700">
    <property type="term" value="F:DNA-binding transcription factor activity"/>
    <property type="evidence" value="ECO:0007669"/>
    <property type="project" value="UniProtKB-UniRule"/>
</dbReference>
<dbReference type="GO" id="GO:0003723">
    <property type="term" value="F:RNA binding"/>
    <property type="evidence" value="ECO:0007669"/>
    <property type="project" value="UniProtKB-UniRule"/>
</dbReference>
<dbReference type="GO" id="GO:0051028">
    <property type="term" value="P:mRNA transport"/>
    <property type="evidence" value="ECO:0007669"/>
    <property type="project" value="UniProtKB-UniRule"/>
</dbReference>
<dbReference type="GO" id="GO:0016032">
    <property type="term" value="P:viral process"/>
    <property type="evidence" value="ECO:0007669"/>
    <property type="project" value="UniProtKB-UniRule"/>
</dbReference>
<dbReference type="Gene3D" id="6.10.140.630">
    <property type="match status" value="1"/>
</dbReference>
<dbReference type="HAMAP" id="MF_04077">
    <property type="entry name" value="REV_HIV1"/>
    <property type="match status" value="1"/>
</dbReference>
<dbReference type="InterPro" id="IPR000625">
    <property type="entry name" value="REV_protein"/>
</dbReference>
<dbReference type="Pfam" id="PF00424">
    <property type="entry name" value="REV"/>
    <property type="match status" value="1"/>
</dbReference>
<organism>
    <name type="scientific">Human immunodeficiency virus type 1 group O (isolate MVP5180)</name>
    <name type="common">HIV-1</name>
    <dbReference type="NCBI Taxonomy" id="388816"/>
    <lineage>
        <taxon>Viruses</taxon>
        <taxon>Riboviria</taxon>
        <taxon>Pararnavirae</taxon>
        <taxon>Artverviricota</taxon>
        <taxon>Revtraviricetes</taxon>
        <taxon>Ortervirales</taxon>
        <taxon>Retroviridae</taxon>
        <taxon>Orthoretrovirinae</taxon>
        <taxon>Lentivirus</taxon>
        <taxon>Human immunodeficiency virus type 1</taxon>
    </lineage>
</organism>
<gene>
    <name evidence="1" type="primary">rev</name>
</gene>
<comment type="function">
    <text evidence="1">Escorts unspliced or incompletely spliced viral pre-mRNAs (late transcripts) out of the nucleus of infected cells. These pre-mRNAs carry a recognition sequence called Rev responsive element (RRE) located in the env gene, that is not present in fully spliced viral mRNAs (early transcripts). This function is essential since most viral proteins are translated from unspliced or partially spliced pre-mRNAs which cannot exit the nucleus by the pathway used by fully processed cellular mRNAs. Rev itself is translated from a fully spliced mRNA that readily exits the nucleus. Rev's nuclear localization signal (NLS) binds directly to KPNB1/Importin beta-1 without previous binding to KPNA1/Importin alpha-1. KPNB1 binds to the GDP bound form of RAN (Ran-GDP) and targets Rev to the nucleus. In the nucleus, the conversion from Ran-GDP to Ran-GTP dissociates Rev from KPNB1 and allows Rev's binding to the RRE in viral pre-mRNAs. Rev multimerization on the RRE via cooperative assembly exposes its nuclear export signal (NES) to the surface. Rev can then form a complex with XPO1/CRM1 and Ran-GTP, leading to nuclear export of the complex. Conversion from Ran-GTP to Ran-GDP mediates dissociation of the Rev/RRE/XPO1/RAN complex, so that Rev can return to the nucleus for a subsequent round of export. Beside KPNB1, also seems to interact with TNPO1/Transportin-1, RANBP5/IPO5 and IPO7/RANBP7 for nuclear import. The nucleoporin-like HRB/RIP is an essential cofactor that probably indirectly interacts with Rev to release HIV RNAs from the perinuclear region to the cytoplasm.</text>
</comment>
<comment type="subunit">
    <text evidence="1">Homomultimer; when bound to the RRE. Multimeric assembly is essential for activity and may involve XPO1. Binds to human KPNB1, XPO1, TNPO1, RANBP5 and IPO7. Interacts with the viral Integrase. Interacts with human KHDRBS1. Interacts with human NAP1; this interaction decreases Rev multimerization and stimulates its activity. Interacts with human DEAD-box helicases DDX3 and DDX24; these interactions may serve for viral RNA export to the cytoplasm and packaging, respectively. Interacts with human PSIP1; this interaction may inhibit HIV-1 DNA integration by promoting dissociation of the Integrase-LEDGF/p75 complex.</text>
</comment>
<comment type="subcellular location">
    <subcellularLocation>
        <location evidence="1">Host nucleus</location>
        <location evidence="1">Host nucleolus</location>
    </subcellularLocation>
    <subcellularLocation>
        <location evidence="1">Host cytoplasm</location>
    </subcellularLocation>
    <text evidence="1">The presence of both nuclear import and nuclear export signals leads to continuous shuttling between the nucleus and cytoplasm.</text>
</comment>
<comment type="domain">
    <text evidence="1">The RNA-binding motif binds to the RRE, a 240 bp stem-and-loop structure present in incompletely spliced viral pre-mRNAs. This region also contains the NLS which mediates nuclear localization via KPNB1 binding and, when the N-terminal sequence is present, nucleolar targeting. These overlapping functions prevent Rev bound to RRE from undesirable return to the nucleus. When Rev binds the RRE, the NLS becomes masked while the NES remains accessible. The leucine-rich NES mediates binding to human XPO1.</text>
</comment>
<comment type="PTM">
    <text evidence="1">Asymmetrically arginine dimethylated at one site by host PRMT6. Methylation impairs the RNA-binding activity and export of viral RNA from the nucleus to the cytoplasm.</text>
</comment>
<comment type="PTM">
    <text evidence="1">Phosphorylated by protein kinase CK2. Presence of, and maybe binding to the N-terminus of the regulatory beta subunit of CK2 is necessary for CK2-mediated Rev's phosphorylation.</text>
</comment>
<comment type="miscellaneous">
    <text evidence="1">HIV-1 lineages are divided in three main groups, M (for Major), O (for Outlier), and N (for New, or Non-M, Non-O). The vast majority of strains found worldwide belong to the group M. Group O seems to be endemic to and largely confined to Cameroon and neighboring countries in West Central Africa, where these viruses represent a small minority of HIV-1 strains. The group N is represented by a limited number of isolates from Cameroonian persons. The group M is further subdivided in 9 clades or subtypes (A to D, F to H, J and K).</text>
</comment>
<comment type="similarity">
    <text evidence="1">Belongs to the HIV-1 REV protein family.</text>
</comment>
<feature type="chain" id="PRO_0000245002" description="Protein Rev">
    <location>
        <begin position="1"/>
        <end position="103"/>
    </location>
</feature>
<feature type="region of interest" description="Homomultimerization" evidence="1">
    <location>
        <begin position="17"/>
        <end position="25"/>
    </location>
</feature>
<feature type="region of interest" description="Disordered" evidence="2">
    <location>
        <begin position="24"/>
        <end position="49"/>
    </location>
</feature>
<feature type="region of interest" description="Disordered" evidence="2">
    <location>
        <begin position="82"/>
        <end position="103"/>
    </location>
</feature>
<feature type="short sequence motif" description="Nuclear localization signal and RNA-binding (RRE)" evidence="1">
    <location>
        <begin position="33"/>
        <end position="49"/>
    </location>
</feature>
<feature type="short sequence motif" description="Nuclear export signal and binding to XPO1" evidence="1">
    <location>
        <begin position="72"/>
        <end position="83"/>
    </location>
</feature>
<feature type="compositionally biased region" description="Basic residues" evidence="2">
    <location>
        <begin position="35"/>
        <end position="48"/>
    </location>
</feature>
<feature type="modified residue" description="Phosphoserine; by host CK2" evidence="1">
    <location>
        <position position="5"/>
    </location>
</feature>
<sequence length="103" mass="11579">MAGRSEEDQQLLQAIQIIKILYQSNPCPTPAGSRNARKNRRRRWRRRQAQVDSLATRILATVVHGSQDNNLVDLPPLEQLNIRDPEADRLPGTGTVDPGTKDN</sequence>
<organismHost>
    <name type="scientific">Homo sapiens</name>
    <name type="common">Human</name>
    <dbReference type="NCBI Taxonomy" id="9606"/>
</organismHost>
<protein>
    <recommendedName>
        <fullName evidence="1">Protein Rev</fullName>
    </recommendedName>
    <alternativeName>
        <fullName evidence="1">ART/TRS</fullName>
    </alternativeName>
    <alternativeName>
        <fullName evidence="1">Anti-repression transactivator</fullName>
    </alternativeName>
    <alternativeName>
        <fullName evidence="1">Regulator of expression of viral proteins</fullName>
    </alternativeName>
</protein>
<reference key="1">
    <citation type="journal article" date="1994" name="J. Virol.">
        <title>A new subtype of human immunodeficiency virus type 1 (MVP-5180) from Cameroon.</title>
        <authorList>
            <person name="Gurtler L.G."/>
            <person name="Hauser P.H."/>
            <person name="Eberle J."/>
            <person name="von Brunn A."/>
            <person name="Knapp S."/>
            <person name="Zekeng L."/>
            <person name="Tsague J.M."/>
            <person name="Kaptue L."/>
        </authorList>
    </citation>
    <scope>NUCLEOTIDE SEQUENCE [GENOMIC RNA]</scope>
</reference>
<reference key="2">
    <citation type="journal article" date="1999" name="Arch. Biochem. Biophys.">
        <title>The ins and outs of HIV Rev.</title>
        <authorList>
            <person name="Hope T.J."/>
        </authorList>
    </citation>
    <scope>REVIEW</scope>
</reference>
<keyword id="KW-0014">AIDS</keyword>
<keyword id="KW-1035">Host cytoplasm</keyword>
<keyword id="KW-1048">Host nucleus</keyword>
<keyword id="KW-0945">Host-virus interaction</keyword>
<keyword id="KW-0488">Methylation</keyword>
<keyword id="KW-0509">mRNA transport</keyword>
<keyword id="KW-0597">Phosphoprotein</keyword>
<keyword id="KW-0694">RNA-binding</keyword>
<keyword id="KW-0813">Transport</keyword>
<evidence type="ECO:0000255" key="1">
    <source>
        <dbReference type="HAMAP-Rule" id="MF_04077"/>
    </source>
</evidence>
<evidence type="ECO:0000256" key="2">
    <source>
        <dbReference type="SAM" id="MobiDB-lite"/>
    </source>
</evidence>
<accession>P0C1L3</accession>
<proteinExistence type="inferred from homology"/>
<name>REV_HV1MV</name>